<protein>
    <recommendedName>
        <fullName>Zinc finger protein GLIS1</fullName>
    </recommendedName>
    <alternativeName>
        <fullName>GLI-similar 1</fullName>
    </alternativeName>
</protein>
<sequence length="620" mass="65976">MAEARTSLSAHCRGPLATGLHPDLDLPGRSLATPAPSCYLLGSEPSSGLGLQPETHLPEGSLKRCCVLGLPPTSPASSSPCASSDVTSIIRSSQTSLVTCVNGLRSPPLTGDLGGPSKRARPGPASTDSHEGSLQLEACRKASFLKQEPADEFSELFGPHQQGLPPPYPLSQLPPGPSLGGLGLGLAGRVVAGRQACRWVDCCAAYEQQEELVRHIEKSHIDQRKGEDFTCFWAGCVRRYKPFNARYKLLIHMRVHSGEKPNKCMFEGCSKAFSRLENLKIHLRSHTGEKPYLCQHPGCQKAFSNSSDRAKHQRTHLDTKPYACQIPGCSKRYTDPSSLRKHVKAHSAKEQQVRKKLHAGPDTEADVLTECLVLQQLHTSTQLAASDGKGGCGLGQELLPGVYPGSITPHNGLASGLLPPAHDVPSRHHPLDATTSSHHHLSPLPMAESTRDGLGPGLLSPIVSPLKGLGPPPLPPSSQSHSPGGQPFPTLPSKPSYPPFQSPPPPPLPSPQGYQGSFHSIQSCFPYGDCYRMAEPAAGGDGLVGETHGFNPLRPNGYHSLSTPLPATGYEALAEASCPTALPQQPSEDVVSSGPEDCGFFPNGAFDHCLGHIPSIYTDT</sequence>
<accession>Q8NBF1</accession>
<accession>Q2M3G9</accession>
<accession>Q8N9V9</accession>
<evidence type="ECO:0000250" key="1">
    <source>
        <dbReference type="UniProtKB" id="Q8K1M4"/>
    </source>
</evidence>
<evidence type="ECO:0000255" key="2"/>
<evidence type="ECO:0000255" key="3">
    <source>
        <dbReference type="PROSITE-ProRule" id="PRU00042"/>
    </source>
</evidence>
<evidence type="ECO:0000256" key="4">
    <source>
        <dbReference type="SAM" id="MobiDB-lite"/>
    </source>
</evidence>
<evidence type="ECO:0000269" key="5">
    <source>
    </source>
</evidence>
<evidence type="ECO:0000269" key="6">
    <source>
    </source>
</evidence>
<evidence type="ECO:0000269" key="7">
    <source>
    </source>
</evidence>
<evidence type="ECO:0000305" key="8"/>
<evidence type="ECO:0000312" key="9">
    <source>
        <dbReference type="EMBL" id="BAC03494.1"/>
    </source>
</evidence>
<evidence type="ECO:0000312" key="10">
    <source>
        <dbReference type="EMBL" id="BAC04178.1"/>
    </source>
</evidence>
<evidence type="ECO:0000312" key="11">
    <source>
        <dbReference type="HGNC" id="HGNC:29525"/>
    </source>
</evidence>
<name>GLIS1_HUMAN</name>
<keyword id="KW-0010">Activator</keyword>
<keyword id="KW-0221">Differentiation</keyword>
<keyword id="KW-0238">DNA-binding</keyword>
<keyword id="KW-0479">Metal-binding</keyword>
<keyword id="KW-0539">Nucleus</keyword>
<keyword id="KW-1267">Proteomics identification</keyword>
<keyword id="KW-1185">Reference proteome</keyword>
<keyword id="KW-0677">Repeat</keyword>
<keyword id="KW-0678">Repressor</keyword>
<keyword id="KW-0804">Transcription</keyword>
<keyword id="KW-0805">Transcription regulation</keyword>
<keyword id="KW-0862">Zinc</keyword>
<keyword id="KW-0863">Zinc-finger</keyword>
<comment type="function">
    <text evidence="1 6">Acts both as a repressor and an activator of transcription (PubMed:21654807). Binds to the consensus sequence 5'-GACCACCCAC-3' (By similarity). By controlling the expression of genes involved in cell differentiation inhibits the lineage commitment of multipotent cells (PubMed:21654807). Prevents, for instance, the differentiation of multipotent mesenchymal cells into adipocyte and osteoblast (By similarity).</text>
</comment>
<comment type="subunit">
    <text evidence="6">Interacts with KLF4 (PubMed:21654807). Interacts with POU5F1 and/or POU5F1B (PubMed:21654807). Interacts with SOX2 (PubMed:21654807).</text>
</comment>
<comment type="interaction">
    <interactant intactId="EBI-12111022">
        <id>Q8NBF1</id>
    </interactant>
    <interactant intactId="EBI-6149907">
        <id>P35321</id>
        <label>SPRR1A</label>
    </interactant>
    <organismsDiffer>false</organismsDiffer>
    <experiments>3</experiments>
</comment>
<comment type="interaction">
    <interactant intactId="EBI-12111022">
        <id>Q8NBF1</id>
    </interactant>
    <interactant intactId="EBI-12111024">
        <id>Q8IYP9</id>
        <label>ZDHHC23</label>
    </interactant>
    <organismsDiffer>false</organismsDiffer>
    <experiments>3</experiments>
</comment>
<comment type="subcellular location">
    <subcellularLocation>
        <location evidence="1">Nucleus</location>
    </subcellularLocation>
</comment>
<comment type="biotechnology">
    <text evidence="6 7">The combined transgenic expression of the OSK transcription factors POU5F1/OCT4, SOX2 and KLF4, reprograms differentiated cells into induced pluripotent stem cells/iSPCs. iPSCs exhibit the morphology and properties of embryonic stem/ES cells. The coexpression of GLIS1 can increase the efficiency of OSK-induced pluripotent stem cells/iPSCs production.</text>
</comment>
<comment type="similarity">
    <text evidence="8">Belongs to the GLI C2H2-type zinc-finger protein family.</text>
</comment>
<comment type="sequence caution" evidence="8">
    <conflict type="erroneous initiation">
        <sequence resource="EMBL-CDS" id="BAC04178"/>
    </conflict>
</comment>
<organism>
    <name type="scientific">Homo sapiens</name>
    <name type="common">Human</name>
    <dbReference type="NCBI Taxonomy" id="9606"/>
    <lineage>
        <taxon>Eukaryota</taxon>
        <taxon>Metazoa</taxon>
        <taxon>Chordata</taxon>
        <taxon>Craniata</taxon>
        <taxon>Vertebrata</taxon>
        <taxon>Euteleostomi</taxon>
        <taxon>Mammalia</taxon>
        <taxon>Eutheria</taxon>
        <taxon>Euarchontoglires</taxon>
        <taxon>Primates</taxon>
        <taxon>Haplorrhini</taxon>
        <taxon>Catarrhini</taxon>
        <taxon>Hominidae</taxon>
        <taxon>Homo</taxon>
    </lineage>
</organism>
<dbReference type="EMBL" id="AK090634">
    <property type="protein sequence ID" value="BAC03494.1"/>
    <property type="molecule type" value="mRNA"/>
</dbReference>
<dbReference type="EMBL" id="AK093474">
    <property type="protein sequence ID" value="BAC04178.1"/>
    <property type="status" value="ALT_INIT"/>
    <property type="molecule type" value="mRNA"/>
</dbReference>
<dbReference type="EMBL" id="AC105280">
    <property type="status" value="NOT_ANNOTATED_CDS"/>
    <property type="molecule type" value="Genomic_DNA"/>
</dbReference>
<dbReference type="EMBL" id="AL591720">
    <property type="status" value="NOT_ANNOTATED_CDS"/>
    <property type="molecule type" value="Genomic_DNA"/>
</dbReference>
<dbReference type="EMBL" id="CH471059">
    <property type="protein sequence ID" value="EAX06734.1"/>
    <property type="molecule type" value="Genomic_DNA"/>
</dbReference>
<dbReference type="EMBL" id="BC101799">
    <property type="protein sequence ID" value="AAI01800.1"/>
    <property type="molecule type" value="mRNA"/>
</dbReference>
<dbReference type="EMBL" id="BC104911">
    <property type="protein sequence ID" value="AAI04912.1"/>
    <property type="molecule type" value="mRNA"/>
</dbReference>
<dbReference type="CCDS" id="CCDS582.1"/>
<dbReference type="RefSeq" id="NP_671726.2">
    <property type="nucleotide sequence ID" value="NM_147193.4"/>
</dbReference>
<dbReference type="SMR" id="Q8NBF1"/>
<dbReference type="BioGRID" id="127182">
    <property type="interactions" value="17"/>
</dbReference>
<dbReference type="FunCoup" id="Q8NBF1">
    <property type="interactions" value="1018"/>
</dbReference>
<dbReference type="IntAct" id="Q8NBF1">
    <property type="interactions" value="3"/>
</dbReference>
<dbReference type="STRING" id="9606.ENSP00000309653"/>
<dbReference type="GlyGen" id="Q8NBF1">
    <property type="glycosylation" value="1 site"/>
</dbReference>
<dbReference type="iPTMnet" id="Q8NBF1"/>
<dbReference type="PhosphoSitePlus" id="Q8NBF1"/>
<dbReference type="BioMuta" id="GLIS1"/>
<dbReference type="DMDM" id="209572624"/>
<dbReference type="jPOST" id="Q8NBF1"/>
<dbReference type="MassIVE" id="Q8NBF1"/>
<dbReference type="PaxDb" id="9606-ENSP00000309653"/>
<dbReference type="PeptideAtlas" id="Q8NBF1"/>
<dbReference type="ProteomicsDB" id="72760"/>
<dbReference type="Antibodypedia" id="748">
    <property type="antibodies" value="121 antibodies from 28 providers"/>
</dbReference>
<dbReference type="DNASU" id="148979"/>
<dbReference type="Ensembl" id="ENST00000312233.4">
    <property type="protein sequence ID" value="ENSP00000309653.2"/>
    <property type="gene ID" value="ENSG00000174332.6"/>
</dbReference>
<dbReference type="GeneID" id="148979"/>
<dbReference type="KEGG" id="hsa:148979"/>
<dbReference type="UCSC" id="uc001cvr.2">
    <property type="organism name" value="human"/>
</dbReference>
<dbReference type="AGR" id="HGNC:29525"/>
<dbReference type="CTD" id="148979"/>
<dbReference type="DisGeNET" id="148979"/>
<dbReference type="GeneCards" id="GLIS1"/>
<dbReference type="HGNC" id="HGNC:29525">
    <property type="gene designation" value="GLIS1"/>
</dbReference>
<dbReference type="HPA" id="ENSG00000174332">
    <property type="expression patterns" value="Tissue enhanced (prostate, seminal vesicle)"/>
</dbReference>
<dbReference type="MIM" id="610378">
    <property type="type" value="gene"/>
</dbReference>
<dbReference type="neXtProt" id="NX_Q8NBF1"/>
<dbReference type="OpenTargets" id="ENSG00000174332"/>
<dbReference type="PharmGKB" id="PA134948186"/>
<dbReference type="VEuPathDB" id="HostDB:ENSG00000174332"/>
<dbReference type="eggNOG" id="KOG1721">
    <property type="taxonomic scope" value="Eukaryota"/>
</dbReference>
<dbReference type="GeneTree" id="ENSGT00940000159218"/>
<dbReference type="HOGENOM" id="CLU_014147_2_1_1"/>
<dbReference type="InParanoid" id="Q8NBF1"/>
<dbReference type="OrthoDB" id="3214149at2759"/>
<dbReference type="PAN-GO" id="Q8NBF1">
    <property type="GO annotations" value="4 GO annotations based on evolutionary models"/>
</dbReference>
<dbReference type="PhylomeDB" id="Q8NBF1"/>
<dbReference type="TreeFam" id="TF350216"/>
<dbReference type="PathwayCommons" id="Q8NBF1"/>
<dbReference type="SignaLink" id="Q8NBF1"/>
<dbReference type="SIGNOR" id="Q8NBF1"/>
<dbReference type="BioGRID-ORCS" id="148979">
    <property type="hits" value="16 hits in 1167 CRISPR screens"/>
</dbReference>
<dbReference type="ChiTaRS" id="GLIS1">
    <property type="organism name" value="human"/>
</dbReference>
<dbReference type="GeneWiki" id="GLIS1"/>
<dbReference type="GenomeRNAi" id="148979"/>
<dbReference type="Pharos" id="Q8NBF1">
    <property type="development level" value="Tbio"/>
</dbReference>
<dbReference type="PRO" id="PR:Q8NBF1"/>
<dbReference type="Proteomes" id="UP000005640">
    <property type="component" value="Chromosome 1"/>
</dbReference>
<dbReference type="RNAct" id="Q8NBF1">
    <property type="molecule type" value="protein"/>
</dbReference>
<dbReference type="Bgee" id="ENSG00000174332">
    <property type="expression patterns" value="Expressed in stromal cell of endometrium and 81 other cell types or tissues"/>
</dbReference>
<dbReference type="ExpressionAtlas" id="Q8NBF1">
    <property type="expression patterns" value="baseline and differential"/>
</dbReference>
<dbReference type="GO" id="GO:0005634">
    <property type="term" value="C:nucleus"/>
    <property type="evidence" value="ECO:0000250"/>
    <property type="project" value="UniProtKB"/>
</dbReference>
<dbReference type="GO" id="GO:0001228">
    <property type="term" value="F:DNA-binding transcription activator activity, RNA polymerase II-specific"/>
    <property type="evidence" value="ECO:0000303"/>
    <property type="project" value="BHF-UCL"/>
</dbReference>
<dbReference type="GO" id="GO:0000981">
    <property type="term" value="F:DNA-binding transcription factor activity, RNA polymerase II-specific"/>
    <property type="evidence" value="ECO:0000318"/>
    <property type="project" value="GO_Central"/>
</dbReference>
<dbReference type="GO" id="GO:0000978">
    <property type="term" value="F:RNA polymerase II cis-regulatory region sequence-specific DNA binding"/>
    <property type="evidence" value="ECO:0000318"/>
    <property type="project" value="GO_Central"/>
</dbReference>
<dbReference type="GO" id="GO:1990837">
    <property type="term" value="F:sequence-specific double-stranded DNA binding"/>
    <property type="evidence" value="ECO:0000314"/>
    <property type="project" value="ARUK-UCL"/>
</dbReference>
<dbReference type="GO" id="GO:0008270">
    <property type="term" value="F:zinc ion binding"/>
    <property type="evidence" value="ECO:0007669"/>
    <property type="project" value="UniProtKB-KW"/>
</dbReference>
<dbReference type="GO" id="GO:0030154">
    <property type="term" value="P:cell differentiation"/>
    <property type="evidence" value="ECO:0007669"/>
    <property type="project" value="UniProtKB-KW"/>
</dbReference>
<dbReference type="GO" id="GO:0000122">
    <property type="term" value="P:negative regulation of transcription by RNA polymerase II"/>
    <property type="evidence" value="ECO:0000250"/>
    <property type="project" value="UniProtKB"/>
</dbReference>
<dbReference type="GO" id="GO:0045944">
    <property type="term" value="P:positive regulation of transcription by RNA polymerase II"/>
    <property type="evidence" value="ECO:0000250"/>
    <property type="project" value="UniProtKB"/>
</dbReference>
<dbReference type="GO" id="GO:0006357">
    <property type="term" value="P:regulation of transcription by RNA polymerase II"/>
    <property type="evidence" value="ECO:0000318"/>
    <property type="project" value="GO_Central"/>
</dbReference>
<dbReference type="FunFam" id="3.30.160.60:FF:000019">
    <property type="entry name" value="GLI family zinc finger 3"/>
    <property type="match status" value="1"/>
</dbReference>
<dbReference type="FunFam" id="3.30.160.60:FF:000031">
    <property type="entry name" value="GLI family zinc finger 3"/>
    <property type="match status" value="1"/>
</dbReference>
<dbReference type="FunFam" id="3.30.160.60:FF:000036">
    <property type="entry name" value="GLI family zinc finger 3"/>
    <property type="match status" value="1"/>
</dbReference>
<dbReference type="FunFam" id="3.30.160.60:FF:000048">
    <property type="entry name" value="GLI family zinc finger 3"/>
    <property type="match status" value="1"/>
</dbReference>
<dbReference type="FunFam" id="3.30.160.60:FF:000453">
    <property type="entry name" value="GLIS family zinc finger 3"/>
    <property type="match status" value="1"/>
</dbReference>
<dbReference type="Gene3D" id="3.30.160.60">
    <property type="entry name" value="Classic Zinc Finger"/>
    <property type="match status" value="5"/>
</dbReference>
<dbReference type="InterPro" id="IPR043359">
    <property type="entry name" value="GLI-like"/>
</dbReference>
<dbReference type="InterPro" id="IPR056436">
    <property type="entry name" value="Znf-C2H2_ZIC1-5/GLI1-3-like"/>
</dbReference>
<dbReference type="InterPro" id="IPR036236">
    <property type="entry name" value="Znf_C2H2_sf"/>
</dbReference>
<dbReference type="InterPro" id="IPR013087">
    <property type="entry name" value="Znf_C2H2_type"/>
</dbReference>
<dbReference type="PANTHER" id="PTHR45718">
    <property type="entry name" value="TRANSCRIPTIONAL ACTIVATOR CUBITUS INTERRUPTUS"/>
    <property type="match status" value="1"/>
</dbReference>
<dbReference type="PANTHER" id="PTHR45718:SF3">
    <property type="entry name" value="ZINC FINGER PROTEIN GLIS1"/>
    <property type="match status" value="1"/>
</dbReference>
<dbReference type="Pfam" id="PF00096">
    <property type="entry name" value="zf-C2H2"/>
    <property type="match status" value="3"/>
</dbReference>
<dbReference type="Pfam" id="PF23561">
    <property type="entry name" value="zf-C2H2_15"/>
    <property type="match status" value="1"/>
</dbReference>
<dbReference type="SMART" id="SM00355">
    <property type="entry name" value="ZnF_C2H2"/>
    <property type="match status" value="5"/>
</dbReference>
<dbReference type="SUPFAM" id="SSF57667">
    <property type="entry name" value="beta-beta-alpha zinc fingers"/>
    <property type="match status" value="3"/>
</dbReference>
<dbReference type="PROSITE" id="PS00028">
    <property type="entry name" value="ZINC_FINGER_C2H2_1"/>
    <property type="match status" value="4"/>
</dbReference>
<dbReference type="PROSITE" id="PS50157">
    <property type="entry name" value="ZINC_FINGER_C2H2_2"/>
    <property type="match status" value="4"/>
</dbReference>
<proteinExistence type="evidence at protein level"/>
<reference evidence="9" key="1">
    <citation type="journal article" date="2004" name="Nat. Genet.">
        <title>Complete sequencing and characterization of 21,243 full-length human cDNAs.</title>
        <authorList>
            <person name="Ota T."/>
            <person name="Suzuki Y."/>
            <person name="Nishikawa T."/>
            <person name="Otsuki T."/>
            <person name="Sugiyama T."/>
            <person name="Irie R."/>
            <person name="Wakamatsu A."/>
            <person name="Hayashi K."/>
            <person name="Sato H."/>
            <person name="Nagai K."/>
            <person name="Kimura K."/>
            <person name="Makita H."/>
            <person name="Sekine M."/>
            <person name="Obayashi M."/>
            <person name="Nishi T."/>
            <person name="Shibahara T."/>
            <person name="Tanaka T."/>
            <person name="Ishii S."/>
            <person name="Yamamoto J."/>
            <person name="Saito K."/>
            <person name="Kawai Y."/>
            <person name="Isono Y."/>
            <person name="Nakamura Y."/>
            <person name="Nagahari K."/>
            <person name="Murakami K."/>
            <person name="Yasuda T."/>
            <person name="Iwayanagi T."/>
            <person name="Wagatsuma M."/>
            <person name="Shiratori A."/>
            <person name="Sudo H."/>
            <person name="Hosoiri T."/>
            <person name="Kaku Y."/>
            <person name="Kodaira H."/>
            <person name="Kondo H."/>
            <person name="Sugawara M."/>
            <person name="Takahashi M."/>
            <person name="Kanda K."/>
            <person name="Yokoi T."/>
            <person name="Furuya T."/>
            <person name="Kikkawa E."/>
            <person name="Omura Y."/>
            <person name="Abe K."/>
            <person name="Kamihara K."/>
            <person name="Katsuta N."/>
            <person name="Sato K."/>
            <person name="Tanikawa M."/>
            <person name="Yamazaki M."/>
            <person name="Ninomiya K."/>
            <person name="Ishibashi T."/>
            <person name="Yamashita H."/>
            <person name="Murakawa K."/>
            <person name="Fujimori K."/>
            <person name="Tanai H."/>
            <person name="Kimata M."/>
            <person name="Watanabe M."/>
            <person name="Hiraoka S."/>
            <person name="Chiba Y."/>
            <person name="Ishida S."/>
            <person name="Ono Y."/>
            <person name="Takiguchi S."/>
            <person name="Watanabe S."/>
            <person name="Yosida M."/>
            <person name="Hotuta T."/>
            <person name="Kusano J."/>
            <person name="Kanehori K."/>
            <person name="Takahashi-Fujii A."/>
            <person name="Hara H."/>
            <person name="Tanase T.-O."/>
            <person name="Nomura Y."/>
            <person name="Togiya S."/>
            <person name="Komai F."/>
            <person name="Hara R."/>
            <person name="Takeuchi K."/>
            <person name="Arita M."/>
            <person name="Imose N."/>
            <person name="Musashino K."/>
            <person name="Yuuki H."/>
            <person name="Oshima A."/>
            <person name="Sasaki N."/>
            <person name="Aotsuka S."/>
            <person name="Yoshikawa Y."/>
            <person name="Matsunawa H."/>
            <person name="Ichihara T."/>
            <person name="Shiohata N."/>
            <person name="Sano S."/>
            <person name="Moriya S."/>
            <person name="Momiyama H."/>
            <person name="Satoh N."/>
            <person name="Takami S."/>
            <person name="Terashima Y."/>
            <person name="Suzuki O."/>
            <person name="Nakagawa S."/>
            <person name="Senoh A."/>
            <person name="Mizoguchi H."/>
            <person name="Goto Y."/>
            <person name="Shimizu F."/>
            <person name="Wakebe H."/>
            <person name="Hishigaki H."/>
            <person name="Watanabe T."/>
            <person name="Sugiyama A."/>
            <person name="Takemoto M."/>
            <person name="Kawakami B."/>
            <person name="Yamazaki M."/>
            <person name="Watanabe K."/>
            <person name="Kumagai A."/>
            <person name="Itakura S."/>
            <person name="Fukuzumi Y."/>
            <person name="Fujimori Y."/>
            <person name="Komiyama M."/>
            <person name="Tashiro H."/>
            <person name="Tanigami A."/>
            <person name="Fujiwara T."/>
            <person name="Ono T."/>
            <person name="Yamada K."/>
            <person name="Fujii Y."/>
            <person name="Ozaki K."/>
            <person name="Hirao M."/>
            <person name="Ohmori Y."/>
            <person name="Kawabata A."/>
            <person name="Hikiji T."/>
            <person name="Kobatake N."/>
            <person name="Inagaki H."/>
            <person name="Ikema Y."/>
            <person name="Okamoto S."/>
            <person name="Okitani R."/>
            <person name="Kawakami T."/>
            <person name="Noguchi S."/>
            <person name="Itoh T."/>
            <person name="Shigeta K."/>
            <person name="Senba T."/>
            <person name="Matsumura K."/>
            <person name="Nakajima Y."/>
            <person name="Mizuno T."/>
            <person name="Morinaga M."/>
            <person name="Sasaki M."/>
            <person name="Togashi T."/>
            <person name="Oyama M."/>
            <person name="Hata H."/>
            <person name="Watanabe M."/>
            <person name="Komatsu T."/>
            <person name="Mizushima-Sugano J."/>
            <person name="Satoh T."/>
            <person name="Shirai Y."/>
            <person name="Takahashi Y."/>
            <person name="Nakagawa K."/>
            <person name="Okumura K."/>
            <person name="Nagase T."/>
            <person name="Nomura N."/>
            <person name="Kikuchi H."/>
            <person name="Masuho Y."/>
            <person name="Yamashita R."/>
            <person name="Nakai K."/>
            <person name="Yada T."/>
            <person name="Nakamura Y."/>
            <person name="Ohara O."/>
            <person name="Isogai T."/>
            <person name="Sugano S."/>
        </authorList>
    </citation>
    <scope>NUCLEOTIDE SEQUENCE [LARGE SCALE MRNA]</scope>
    <scope>VARIANTS ALA-110 AND GLY-187</scope>
    <source>
        <tissue evidence="10">Glial tumor</tissue>
        <tissue evidence="10">Testis</tissue>
    </source>
</reference>
<reference key="2">
    <citation type="journal article" date="2006" name="Nature">
        <title>The DNA sequence and biological annotation of human chromosome 1.</title>
        <authorList>
            <person name="Gregory S.G."/>
            <person name="Barlow K.F."/>
            <person name="McLay K.E."/>
            <person name="Kaul R."/>
            <person name="Swarbreck D."/>
            <person name="Dunham A."/>
            <person name="Scott C.E."/>
            <person name="Howe K.L."/>
            <person name="Woodfine K."/>
            <person name="Spencer C.C.A."/>
            <person name="Jones M.C."/>
            <person name="Gillson C."/>
            <person name="Searle S."/>
            <person name="Zhou Y."/>
            <person name="Kokocinski F."/>
            <person name="McDonald L."/>
            <person name="Evans R."/>
            <person name="Phillips K."/>
            <person name="Atkinson A."/>
            <person name="Cooper R."/>
            <person name="Jones C."/>
            <person name="Hall R.E."/>
            <person name="Andrews T.D."/>
            <person name="Lloyd C."/>
            <person name="Ainscough R."/>
            <person name="Almeida J.P."/>
            <person name="Ambrose K.D."/>
            <person name="Anderson F."/>
            <person name="Andrew R.W."/>
            <person name="Ashwell R.I.S."/>
            <person name="Aubin K."/>
            <person name="Babbage A.K."/>
            <person name="Bagguley C.L."/>
            <person name="Bailey J."/>
            <person name="Beasley H."/>
            <person name="Bethel G."/>
            <person name="Bird C.P."/>
            <person name="Bray-Allen S."/>
            <person name="Brown J.Y."/>
            <person name="Brown A.J."/>
            <person name="Buckley D."/>
            <person name="Burton J."/>
            <person name="Bye J."/>
            <person name="Carder C."/>
            <person name="Chapman J.C."/>
            <person name="Clark S.Y."/>
            <person name="Clarke G."/>
            <person name="Clee C."/>
            <person name="Cobley V."/>
            <person name="Collier R.E."/>
            <person name="Corby N."/>
            <person name="Coville G.J."/>
            <person name="Davies J."/>
            <person name="Deadman R."/>
            <person name="Dunn M."/>
            <person name="Earthrowl M."/>
            <person name="Ellington A.G."/>
            <person name="Errington H."/>
            <person name="Frankish A."/>
            <person name="Frankland J."/>
            <person name="French L."/>
            <person name="Garner P."/>
            <person name="Garnett J."/>
            <person name="Gay L."/>
            <person name="Ghori M.R.J."/>
            <person name="Gibson R."/>
            <person name="Gilby L.M."/>
            <person name="Gillett W."/>
            <person name="Glithero R.J."/>
            <person name="Grafham D.V."/>
            <person name="Griffiths C."/>
            <person name="Griffiths-Jones S."/>
            <person name="Grocock R."/>
            <person name="Hammond S."/>
            <person name="Harrison E.S.I."/>
            <person name="Hart E."/>
            <person name="Haugen E."/>
            <person name="Heath P.D."/>
            <person name="Holmes S."/>
            <person name="Holt K."/>
            <person name="Howden P.J."/>
            <person name="Hunt A.R."/>
            <person name="Hunt S.E."/>
            <person name="Hunter G."/>
            <person name="Isherwood J."/>
            <person name="James R."/>
            <person name="Johnson C."/>
            <person name="Johnson D."/>
            <person name="Joy A."/>
            <person name="Kay M."/>
            <person name="Kershaw J.K."/>
            <person name="Kibukawa M."/>
            <person name="Kimberley A.M."/>
            <person name="King A."/>
            <person name="Knights A.J."/>
            <person name="Lad H."/>
            <person name="Laird G."/>
            <person name="Lawlor S."/>
            <person name="Leongamornlert D.A."/>
            <person name="Lloyd D.M."/>
            <person name="Loveland J."/>
            <person name="Lovell J."/>
            <person name="Lush M.J."/>
            <person name="Lyne R."/>
            <person name="Martin S."/>
            <person name="Mashreghi-Mohammadi M."/>
            <person name="Matthews L."/>
            <person name="Matthews N.S.W."/>
            <person name="McLaren S."/>
            <person name="Milne S."/>
            <person name="Mistry S."/>
            <person name="Moore M.J.F."/>
            <person name="Nickerson T."/>
            <person name="O'Dell C.N."/>
            <person name="Oliver K."/>
            <person name="Palmeiri A."/>
            <person name="Palmer S.A."/>
            <person name="Parker A."/>
            <person name="Patel D."/>
            <person name="Pearce A.V."/>
            <person name="Peck A.I."/>
            <person name="Pelan S."/>
            <person name="Phelps K."/>
            <person name="Phillimore B.J."/>
            <person name="Plumb R."/>
            <person name="Rajan J."/>
            <person name="Raymond C."/>
            <person name="Rouse G."/>
            <person name="Saenphimmachak C."/>
            <person name="Sehra H.K."/>
            <person name="Sheridan E."/>
            <person name="Shownkeen R."/>
            <person name="Sims S."/>
            <person name="Skuce C.D."/>
            <person name="Smith M."/>
            <person name="Steward C."/>
            <person name="Subramanian S."/>
            <person name="Sycamore N."/>
            <person name="Tracey A."/>
            <person name="Tromans A."/>
            <person name="Van Helmond Z."/>
            <person name="Wall M."/>
            <person name="Wallis J.M."/>
            <person name="White S."/>
            <person name="Whitehead S.L."/>
            <person name="Wilkinson J.E."/>
            <person name="Willey D.L."/>
            <person name="Williams H."/>
            <person name="Wilming L."/>
            <person name="Wray P.W."/>
            <person name="Wu Z."/>
            <person name="Coulson A."/>
            <person name="Vaudin M."/>
            <person name="Sulston J.E."/>
            <person name="Durbin R.M."/>
            <person name="Hubbard T."/>
            <person name="Wooster R."/>
            <person name="Dunham I."/>
            <person name="Carter N.P."/>
            <person name="McVean G."/>
            <person name="Ross M.T."/>
            <person name="Harrow J."/>
            <person name="Olson M.V."/>
            <person name="Beck S."/>
            <person name="Rogers J."/>
            <person name="Bentley D.R."/>
        </authorList>
    </citation>
    <scope>NUCLEOTIDE SEQUENCE [LARGE SCALE GENOMIC DNA]</scope>
</reference>
<reference key="3">
    <citation type="submission" date="2005-09" db="EMBL/GenBank/DDBJ databases">
        <authorList>
            <person name="Mural R.J."/>
            <person name="Istrail S."/>
            <person name="Sutton G.G."/>
            <person name="Florea L."/>
            <person name="Halpern A.L."/>
            <person name="Mobarry C.M."/>
            <person name="Lippert R."/>
            <person name="Walenz B."/>
            <person name="Shatkay H."/>
            <person name="Dew I."/>
            <person name="Miller J.R."/>
            <person name="Flanigan M.J."/>
            <person name="Edwards N.J."/>
            <person name="Bolanos R."/>
            <person name="Fasulo D."/>
            <person name="Halldorsson B.V."/>
            <person name="Hannenhalli S."/>
            <person name="Turner R."/>
            <person name="Yooseph S."/>
            <person name="Lu F."/>
            <person name="Nusskern D.R."/>
            <person name="Shue B.C."/>
            <person name="Zheng X.H."/>
            <person name="Zhong F."/>
            <person name="Delcher A.L."/>
            <person name="Huson D.H."/>
            <person name="Kravitz S.A."/>
            <person name="Mouchard L."/>
            <person name="Reinert K."/>
            <person name="Remington K.A."/>
            <person name="Clark A.G."/>
            <person name="Waterman M.S."/>
            <person name="Eichler E.E."/>
            <person name="Adams M.D."/>
            <person name="Hunkapiller M.W."/>
            <person name="Myers E.W."/>
            <person name="Venter J.C."/>
        </authorList>
    </citation>
    <scope>NUCLEOTIDE SEQUENCE [LARGE SCALE GENOMIC DNA]</scope>
</reference>
<reference key="4">
    <citation type="journal article" date="2004" name="Genome Res.">
        <title>The status, quality, and expansion of the NIH full-length cDNA project: the Mammalian Gene Collection (MGC).</title>
        <authorList>
            <consortium name="The MGC Project Team"/>
        </authorList>
    </citation>
    <scope>NUCLEOTIDE SEQUENCE [LARGE SCALE MRNA]</scope>
    <source>
        <tissue>Lung</tissue>
        <tissue>Placenta</tissue>
    </source>
</reference>
<reference key="5">
    <citation type="journal article" date="2011" name="Nature">
        <title>Direct reprogramming of somatic cells is promoted by maternal transcription factor Glis1.</title>
        <authorList>
            <person name="Maekawa M."/>
            <person name="Yamaguchi K."/>
            <person name="Nakamura T."/>
            <person name="Shibukawa R."/>
            <person name="Kodanaka I."/>
            <person name="Ichisaka T."/>
            <person name="Kawamura Y."/>
            <person name="Mochizuki H."/>
            <person name="Goshima N."/>
            <person name="Yamanaka S."/>
        </authorList>
    </citation>
    <scope>FUNCTION</scope>
    <scope>INTERACTION WITH KLF4; POU5F1; POU5F1B AND SOX2</scope>
    <scope>BIOTECHNOLOGY</scope>
</reference>
<reference key="6">
    <citation type="journal article" date="2017" name="PLoS ONE">
        <title>Enhanced generation of iPSCs from older adult human cells by a synthetic five-factor self-replicative RNA.</title>
        <authorList>
            <person name="Yoshioka N."/>
            <person name="Dowdy S.F."/>
        </authorList>
    </citation>
    <scope>BIOTECHNOLOGY</scope>
</reference>
<feature type="chain" id="PRO_0000047209" description="Zinc finger protein GLIS1">
    <location>
        <begin position="1"/>
        <end position="620"/>
    </location>
</feature>
<feature type="zinc finger region" description="C2H2-type 1" evidence="3">
    <location>
        <begin position="195"/>
        <end position="220"/>
    </location>
</feature>
<feature type="zinc finger region" description="C2H2-type 2; atypical" evidence="3">
    <location>
        <begin position="229"/>
        <end position="256"/>
    </location>
</feature>
<feature type="zinc finger region" description="C2H2-type 3" evidence="3">
    <location>
        <begin position="262"/>
        <end position="286"/>
    </location>
</feature>
<feature type="zinc finger region" description="C2H2-type 4" evidence="3">
    <location>
        <begin position="292"/>
        <end position="316"/>
    </location>
</feature>
<feature type="zinc finger region" description="C2H2-type 5" evidence="3">
    <location>
        <begin position="322"/>
        <end position="346"/>
    </location>
</feature>
<feature type="region of interest" description="Disordered" evidence="4">
    <location>
        <begin position="108"/>
        <end position="132"/>
    </location>
</feature>
<feature type="region of interest" description="Disordered" evidence="4">
    <location>
        <begin position="414"/>
        <end position="515"/>
    </location>
</feature>
<feature type="short sequence motif" description="Bipartite nuclear localization signal" evidence="2">
    <location>
        <begin position="340"/>
        <end position="356"/>
    </location>
</feature>
<feature type="compositionally biased region" description="Low complexity" evidence="4">
    <location>
        <begin position="477"/>
        <end position="488"/>
    </location>
</feature>
<feature type="compositionally biased region" description="Pro residues" evidence="4">
    <location>
        <begin position="489"/>
        <end position="510"/>
    </location>
</feature>
<feature type="sequence variant" id="VAR_047031" description="In dbSNP:rs4307514." evidence="5">
    <original>T</original>
    <variation>A</variation>
    <location>
        <position position="110"/>
    </location>
</feature>
<feature type="sequence variant" id="VAR_033544" description="In dbSNP:rs34961060.">
    <original>F</original>
    <variation>L</variation>
    <location>
        <position position="157"/>
    </location>
</feature>
<feature type="sequence variant" id="VAR_047032" description="In dbSNP:rs35227000." evidence="5">
    <original>A</original>
    <variation>G</variation>
    <location>
        <position position="187"/>
    </location>
</feature>
<feature type="sequence conflict" description="In Ref. 1; BAC03494." evidence="8" ref="1">
    <original>I</original>
    <variation>T</variation>
    <location>
        <position position="221"/>
    </location>
</feature>
<gene>
    <name evidence="11" type="primary">GLIS1</name>
</gene>